<protein>
    <recommendedName>
        <fullName>CDK5 regulatory subunit-associated protein 2</fullName>
    </recommendedName>
    <alternativeName>
        <fullName>CDK5 activator-binding protein C48</fullName>
    </alternativeName>
</protein>
<name>CK5P2_MACFA</name>
<evidence type="ECO:0000250" key="1">
    <source>
        <dbReference type="UniProtKB" id="Q8K389"/>
    </source>
</evidence>
<evidence type="ECO:0000250" key="2">
    <source>
        <dbReference type="UniProtKB" id="Q96SN8"/>
    </source>
</evidence>
<evidence type="ECO:0000250" key="3">
    <source>
        <dbReference type="UniProtKB" id="Q9JLH5"/>
    </source>
</evidence>
<dbReference type="EMBL" id="AB056817">
    <property type="protein sequence ID" value="BAB39343.1"/>
    <property type="molecule type" value="mRNA"/>
</dbReference>
<dbReference type="SMR" id="Q9BE52"/>
<dbReference type="STRING" id="9541.ENSMFAP00000006458"/>
<dbReference type="eggNOG" id="ENOG502QTI7">
    <property type="taxonomic scope" value="Eukaryota"/>
</dbReference>
<dbReference type="Proteomes" id="UP000233100">
    <property type="component" value="Unplaced"/>
</dbReference>
<dbReference type="GO" id="GO:0005813">
    <property type="term" value="C:centrosome"/>
    <property type="evidence" value="ECO:0000250"/>
    <property type="project" value="UniProtKB"/>
</dbReference>
<dbReference type="GO" id="GO:0005737">
    <property type="term" value="C:cytoplasm"/>
    <property type="evidence" value="ECO:0000250"/>
    <property type="project" value="UniProtKB"/>
</dbReference>
<dbReference type="GO" id="GO:0005794">
    <property type="term" value="C:Golgi apparatus"/>
    <property type="evidence" value="ECO:0000250"/>
    <property type="project" value="UniProtKB"/>
</dbReference>
<dbReference type="GO" id="GO:0005874">
    <property type="term" value="C:microtubule"/>
    <property type="evidence" value="ECO:0000250"/>
    <property type="project" value="UniProtKB"/>
</dbReference>
<dbReference type="GO" id="GO:0035371">
    <property type="term" value="C:microtubule plus-end"/>
    <property type="evidence" value="ECO:0000250"/>
    <property type="project" value="UniProtKB"/>
</dbReference>
<dbReference type="GO" id="GO:0097431">
    <property type="term" value="C:mitotic spindle pole"/>
    <property type="evidence" value="ECO:0007669"/>
    <property type="project" value="TreeGrafter"/>
</dbReference>
<dbReference type="GO" id="GO:0000242">
    <property type="term" value="C:pericentriolar material"/>
    <property type="evidence" value="ECO:0000250"/>
    <property type="project" value="UniProtKB"/>
</dbReference>
<dbReference type="GO" id="GO:0048471">
    <property type="term" value="C:perinuclear region of cytoplasm"/>
    <property type="evidence" value="ECO:0000250"/>
    <property type="project" value="UniProtKB"/>
</dbReference>
<dbReference type="GO" id="GO:0000922">
    <property type="term" value="C:spindle pole"/>
    <property type="evidence" value="ECO:0000250"/>
    <property type="project" value="UniProtKB"/>
</dbReference>
<dbReference type="GO" id="GO:0005516">
    <property type="term" value="F:calmodulin binding"/>
    <property type="evidence" value="ECO:0000250"/>
    <property type="project" value="UniProtKB"/>
</dbReference>
<dbReference type="GO" id="GO:0043015">
    <property type="term" value="F:gamma-tubulin binding"/>
    <property type="evidence" value="ECO:0007669"/>
    <property type="project" value="TreeGrafter"/>
</dbReference>
<dbReference type="GO" id="GO:0008017">
    <property type="term" value="F:microtubule binding"/>
    <property type="evidence" value="ECO:0007669"/>
    <property type="project" value="TreeGrafter"/>
</dbReference>
<dbReference type="GO" id="GO:0019901">
    <property type="term" value="F:protein kinase binding"/>
    <property type="evidence" value="ECO:0000250"/>
    <property type="project" value="UniProtKB"/>
</dbReference>
<dbReference type="GO" id="GO:0000976">
    <property type="term" value="F:transcription cis-regulatory region binding"/>
    <property type="evidence" value="ECO:0000250"/>
    <property type="project" value="UniProtKB"/>
</dbReference>
<dbReference type="GO" id="GO:0007420">
    <property type="term" value="P:brain development"/>
    <property type="evidence" value="ECO:0000250"/>
    <property type="project" value="UniProtKB"/>
</dbReference>
<dbReference type="GO" id="GO:0007099">
    <property type="term" value="P:centriole replication"/>
    <property type="evidence" value="ECO:0007669"/>
    <property type="project" value="TreeGrafter"/>
</dbReference>
<dbReference type="GO" id="GO:0007098">
    <property type="term" value="P:centrosome cycle"/>
    <property type="evidence" value="ECO:0000250"/>
    <property type="project" value="UniProtKB"/>
</dbReference>
<dbReference type="GO" id="GO:0007059">
    <property type="term" value="P:chromosome segregation"/>
    <property type="evidence" value="ECO:0000250"/>
    <property type="project" value="UniProtKB"/>
</dbReference>
<dbReference type="GO" id="GO:0000132">
    <property type="term" value="P:establishment of mitotic spindle orientation"/>
    <property type="evidence" value="ECO:0000250"/>
    <property type="project" value="UniProtKB"/>
</dbReference>
<dbReference type="GO" id="GO:0001578">
    <property type="term" value="P:microtubule bundle formation"/>
    <property type="evidence" value="ECO:0000250"/>
    <property type="project" value="UniProtKB"/>
</dbReference>
<dbReference type="GO" id="GO:0000226">
    <property type="term" value="P:microtubule cytoskeleton organization"/>
    <property type="evidence" value="ECO:0000250"/>
    <property type="project" value="UniProtKB"/>
</dbReference>
<dbReference type="GO" id="GO:0031023">
    <property type="term" value="P:microtubule organizing center organization"/>
    <property type="evidence" value="ECO:0000250"/>
    <property type="project" value="UniProtKB"/>
</dbReference>
<dbReference type="GO" id="GO:0046600">
    <property type="term" value="P:negative regulation of centriole replication"/>
    <property type="evidence" value="ECO:0000250"/>
    <property type="project" value="UniProtKB"/>
</dbReference>
<dbReference type="GO" id="GO:0022008">
    <property type="term" value="P:neurogenesis"/>
    <property type="evidence" value="ECO:0000250"/>
    <property type="project" value="UniProtKB"/>
</dbReference>
<dbReference type="GO" id="GO:0045893">
    <property type="term" value="P:positive regulation of DNA-templated transcription"/>
    <property type="evidence" value="ECO:0000250"/>
    <property type="project" value="UniProtKB"/>
</dbReference>
<dbReference type="GO" id="GO:0090266">
    <property type="term" value="P:regulation of mitotic cell cycle spindle assembly checkpoint"/>
    <property type="evidence" value="ECO:0000250"/>
    <property type="project" value="UniProtKB"/>
</dbReference>
<dbReference type="Gene3D" id="1.10.287.1490">
    <property type="match status" value="1"/>
</dbReference>
<dbReference type="InterPro" id="IPR056273">
    <property type="entry name" value="CC_CDK5RAP2_MYOME"/>
</dbReference>
<dbReference type="InterPro" id="IPR042791">
    <property type="entry name" value="CDK5RAP2"/>
</dbReference>
<dbReference type="InterPro" id="IPR012943">
    <property type="entry name" value="Cnn_1N"/>
</dbReference>
<dbReference type="PANTHER" id="PTHR46930">
    <property type="entry name" value="CDK5 REGULATORY SUBUNIT-ASSOCIATED PROTEIN 2"/>
    <property type="match status" value="1"/>
</dbReference>
<dbReference type="PANTHER" id="PTHR46930:SF1">
    <property type="entry name" value="CDK5 REGULATORY SUBUNIT-ASSOCIATED PROTEIN 2"/>
    <property type="match status" value="1"/>
</dbReference>
<dbReference type="Pfam" id="PF23246">
    <property type="entry name" value="CC_CDK5RAP2"/>
    <property type="match status" value="1"/>
</dbReference>
<dbReference type="Pfam" id="PF07989">
    <property type="entry name" value="Cnn_1N"/>
    <property type="match status" value="1"/>
</dbReference>
<reference key="1">
    <citation type="submission" date="2001-03" db="EMBL/GenBank/DDBJ databases">
        <title>Isolation of full-length cDNA clones from macaque brain cDNA libraries.</title>
        <authorList>
            <person name="Osada N."/>
            <person name="Hida M."/>
            <person name="Kusuda J."/>
            <person name="Tanuma R."/>
            <person name="Iseki K."/>
            <person name="Hirai M."/>
            <person name="Terao K."/>
            <person name="Suzuki Y."/>
            <person name="Sugano S."/>
            <person name="Hashimoto K."/>
        </authorList>
    </citation>
    <scope>NUCLEOTIDE SEQUENCE [LARGE SCALE MRNA]</scope>
    <source>
        <tissue>Frontal cortex</tissue>
    </source>
</reference>
<comment type="function">
    <text evidence="1 2">Potential regulator of CDK5 activity via its interaction with CDK5R1 (By similarity). Negative regulator of centriole disengagement (licensing) which maintains centriole engagement and cohesion. Involved in regulation of mitotic spindle orientation (By similarity). Plays a role in the spindle checkpoint activation by acting as a transcriptional regulator of both BUBR1 and MAD2 promoter (By similarity). Together with EB1/MAPRE1, may promote microtubule polymerization, bundle formation, growth and dynamics at the plus ends (By similarity). Regulates centrosomal maturation by recruitment of the gamma-tubulin ring complex (gTuRC) onto centrosomes (By similarity). In complex with PDE4DIP isoform 13/MMG8/SMYLE, MAPRE1 and AKAP9, contributes to microtubules nucleation and extension from the centrosome to the cell periphery (By similarity). Required for the recruitment of AKAP9 to centrosomes (By similarity). Plays a role in neurogenesis (By similarity).</text>
</comment>
<comment type="subunit">
    <text evidence="2 3">Homodimer (By similarity). Interacts with CDK5R1 (p35 form) (By similarity). CDK5RAP1, CDK5RAP2 and CDK5RAP3 show competitive binding to CDK5R1 (By similarity). May form a complex with CDK5R1 and CDK5 (By similarity). Interacts with pericentrin/PCNT; the interaction is leading to centrosomal and Golgi localization of CDK5RAP2 and PCNT (By similarity). Interacts with AKAP9; the interaction targets CDK5RAP2 and AKAP9 to Golgi apparatus (By similarity). Interacts with MAPRE1; the interaction is direct and targets CDK5RAP2 and EB1/MAPRE1 to microtubule plus ends (By similarity). Interacts with TUBG1; the interaction is leading to the centrosomal localization of CDK5RAP2 and TUBG1 (By similarity). Interacts with TUBGCP3 (By similarity). Interacts with CALM1 (By similarity). Interacts with CDC20 (By similarity). Interacts with CEP68; degradation of CEP68 in early mitosis leads to removal of CDK5RAP2 from the centrosome which promotes centriole disengagement and subsequent centriole separation (By similarity). Interacts with NCKAP5L (By similarity). Forms a pericentrosomal complex with AKAP9, MAPRE1 and PDE4DIP isoform 13/MMG8/SMYLE; within this complex, MAPRE1 binding to CDK5RAP2 may be mediated by PDE4DIP (By similarity). Interacts with LGALS3BP; this interaction may connect the pericentrosomal complex to the gamma-tubulin ring complex (gTuRC) to promote microtubule assembly and acetylation (By similarity). Interacts with CCDC66 (By similarity). Associates (via CM1 motif) with TUBGCP2 of the gTuRC; the interaction plays a role in gTuRC activation (By similarity).</text>
</comment>
<comment type="subcellular location">
    <subcellularLocation>
        <location evidence="2">Cytoplasm</location>
        <location evidence="2">Cytoskeleton</location>
        <location evidence="2">Microtubule organizing center</location>
        <location evidence="2">Centrosome</location>
    </subcellularLocation>
    <subcellularLocation>
        <location evidence="2">Golgi apparatus</location>
    </subcellularLocation>
    <subcellularLocation>
        <location evidence="2">Cytoplasm</location>
    </subcellularLocation>
    <subcellularLocation>
        <location evidence="2">Cytoplasm</location>
        <location evidence="2">Cytoskeleton</location>
    </subcellularLocation>
    <text evidence="2">Found in the pericentriolar region adhering to the surface of the centrosome and in the region of the centrosomal appendages. Localizes to microtubule plus ends in the presence of EB1/MAPRE1. Localization to centrosomes versus Golgi apparatus may be cell type-dependent.</text>
</comment>
<comment type="PTM">
    <text evidence="3">Phosphorylated in vitro by CDK5.</text>
</comment>
<proteinExistence type="evidence at transcript level"/>
<organism>
    <name type="scientific">Macaca fascicularis</name>
    <name type="common">Crab-eating macaque</name>
    <name type="synonym">Cynomolgus monkey</name>
    <dbReference type="NCBI Taxonomy" id="9541"/>
    <lineage>
        <taxon>Eukaryota</taxon>
        <taxon>Metazoa</taxon>
        <taxon>Chordata</taxon>
        <taxon>Craniata</taxon>
        <taxon>Vertebrata</taxon>
        <taxon>Euteleostomi</taxon>
        <taxon>Mammalia</taxon>
        <taxon>Eutheria</taxon>
        <taxon>Euarchontoglires</taxon>
        <taxon>Primates</taxon>
        <taxon>Haplorrhini</taxon>
        <taxon>Catarrhini</taxon>
        <taxon>Cercopithecidae</taxon>
        <taxon>Cercopithecinae</taxon>
        <taxon>Macaca</taxon>
    </lineage>
</organism>
<sequence length="862" mass="99105">MMDSVLEEDVTLLGTLSGCSGLVPNVPDDLDGINPDARLGNGVLSNVSEETVSPTRARNMKDFENQITELKKENFNLKLRIYFLEERMQQEFHGPAEHIYKTNIELKVEVESLKRELQERERLLIRASKAVESLAEAGGSEIQRVKEDARKKVQQVEDLLTKRILLLEKDVKAAQAELEKAFAGTETEKALRLSLESKLSEMKKMHKGDLAMALVLDEKDRLIEELKLSLKSKEALIQCLKEEKSQMASPDENVSSGELRGLCAAPREEKERETEAAQMEHQKERNSFEERIQALEEDLREKEREIATEKKNSLKRDKAIQGLTMALKSKEKKVEELNSEIEKLSAAFAKAREALQKAQTQEFQGSENYEAALSGKEALLTELRSQNLTKSAENHRLRRSIKKITQELSDLQQERERLEKDLEEAHREKSRGDCTIRDLRNEVEKLRNEVNERKKAMENRYKNLLSESSKKLHNQEQVIKHLTERTNHKDMLLQKFNEKDLEVIQQNHYLMTAEDLELRSEGLITEKCPSQQSPGSKTIFSKEEKQSSDYQELIQVLKKEQDIYTHLVKSLQESDSINNLQAELNNIFALRKQLERDVLSYQNLRRTLEEQISEIRRREEESFSFYSDQTSYLSICLEENNRFQVEHFSQEELKKKVSDLIQLVKELYTDDQHLKKTIFDLSCMGFQGNGFPDRLVSTEQTEIMKDLSKGGCKNGYLRHTEPKILESDGAHTPGCLEEGVFINLLAPLFNEKATLLLESRPDLLKVVRELLLGHLCLAEQDVSGEHLGGKTEKTPKLHKKLFEQEKKLQNTMKLLQLSKRQEKVIFDQLVVTHKILRKARGNLELRPGGAHPGTCSPSRPGS</sequence>
<accession>Q9BE52</accession>
<keyword id="KW-0112">Calmodulin-binding</keyword>
<keyword id="KW-0963">Cytoplasm</keyword>
<keyword id="KW-0206">Cytoskeleton</keyword>
<keyword id="KW-0333">Golgi apparatus</keyword>
<keyword id="KW-0493">Microtubule</keyword>
<keyword id="KW-0597">Phosphoprotein</keyword>
<keyword id="KW-1185">Reference proteome</keyword>
<gene>
    <name type="primary">CDK5RAP2</name>
    <name type="ORF">QflA-15432</name>
</gene>
<feature type="chain" id="PRO_0000089836" description="CDK5 regulatory subunit-associated protein 2">
    <location>
        <begin position="1"/>
        <end position="862"/>
    </location>
</feature>
<feature type="region of interest" description="CM1 motif; interacts with the gTuRC" evidence="2">
    <location>
        <begin position="51"/>
        <end position="94"/>
    </location>
</feature>
<feature type="region of interest" description="Interaction with NCKAP5L" evidence="2">
    <location>
        <begin position="58"/>
        <end position="196"/>
    </location>
</feature>
<feature type="region of interest" description="Required for centrosomal attachment, Golgi localization and CALM1 interaction">
    <location>
        <begin position="830"/>
        <end position="839"/>
    </location>
</feature>
<feature type="modified residue" description="Phosphoserine" evidence="2">
    <location>
        <position position="547"/>
    </location>
</feature>
<feature type="modified residue" description="Phosphoserine" evidence="2">
    <location>
        <position position="862"/>
    </location>
</feature>